<accession>Q9M8R9</accession>
<feature type="initiator methionine" description="Removed" evidence="2">
    <location>
        <position position="1"/>
    </location>
</feature>
<feature type="chain" id="PRO_0000209652" description="Putative 4-hydroxy-4-methyl-2-oxoglutarate aldolase 1">
    <location>
        <begin position="2"/>
        <end position="166"/>
    </location>
</feature>
<feature type="binding site" evidence="1">
    <location>
        <begin position="81"/>
        <end position="84"/>
    </location>
    <ligand>
        <name>substrate</name>
    </ligand>
</feature>
<feature type="binding site" evidence="1">
    <location>
        <position position="103"/>
    </location>
    <ligand>
        <name>substrate</name>
    </ligand>
</feature>
<feature type="binding site" evidence="1">
    <location>
        <position position="104"/>
    </location>
    <ligand>
        <name>a divalent metal cation</name>
        <dbReference type="ChEBI" id="CHEBI:60240"/>
    </ligand>
</feature>
<feature type="modified residue" description="N-acetylalanine" evidence="2">
    <location>
        <position position="2"/>
    </location>
</feature>
<protein>
    <recommendedName>
        <fullName>Putative 4-hydroxy-4-methyl-2-oxoglutarate aldolase 1</fullName>
        <shortName>HMG aldolase 1</shortName>
        <ecNumber>4.1.3.17</ecNumber>
    </recommendedName>
    <alternativeName>
        <fullName>Oxaloacetate decarboxylase</fullName>
        <shortName>OAA decarboxylase</shortName>
        <ecNumber>4.1.1.112</ecNumber>
    </alternativeName>
    <alternativeName>
        <fullName>Regulator of ribonuclease activity homolog 1</fullName>
    </alternativeName>
    <alternativeName>
        <fullName>RraA-like protein 1</fullName>
    </alternativeName>
</protein>
<comment type="function">
    <text evidence="1">Catalyzes the aldol cleavage of 4-hydroxy-4-methyl-2-oxoglutarate (HMG) into 2 molecules of pyruvate. Also contains a secondary oxaloacetate (OAA) decarboxylase activity due to the common pyruvate enolate transition state formed following C-C bond cleavage in the retro-aldol and decarboxylation reactions (By similarity).</text>
</comment>
<comment type="catalytic activity">
    <reaction>
        <text>4-hydroxy-4-methyl-2-oxoglutarate = 2 pyruvate</text>
        <dbReference type="Rhea" id="RHEA:22748"/>
        <dbReference type="ChEBI" id="CHEBI:15361"/>
        <dbReference type="ChEBI" id="CHEBI:58276"/>
        <dbReference type="EC" id="4.1.3.17"/>
    </reaction>
</comment>
<comment type="catalytic activity">
    <reaction>
        <text>oxaloacetate + H(+) = pyruvate + CO2</text>
        <dbReference type="Rhea" id="RHEA:15641"/>
        <dbReference type="ChEBI" id="CHEBI:15361"/>
        <dbReference type="ChEBI" id="CHEBI:15378"/>
        <dbReference type="ChEBI" id="CHEBI:16452"/>
        <dbReference type="ChEBI" id="CHEBI:16526"/>
        <dbReference type="EC" id="4.1.1.112"/>
    </reaction>
</comment>
<comment type="cofactor">
    <cofactor evidence="1">
        <name>a divalent metal cation</name>
        <dbReference type="ChEBI" id="CHEBI:60240"/>
    </cofactor>
    <text evidence="1">Divalent metal cation.</text>
</comment>
<comment type="subunit">
    <text evidence="1">Homotrimer.</text>
</comment>
<comment type="similarity">
    <text evidence="3">Belongs to the class II aldolase/RraA-like family.</text>
</comment>
<keyword id="KW-0007">Acetylation</keyword>
<keyword id="KW-0456">Lyase</keyword>
<keyword id="KW-0479">Metal-binding</keyword>
<keyword id="KW-1185">Reference proteome</keyword>
<name>RRAA1_ARATH</name>
<evidence type="ECO:0000250" key="1"/>
<evidence type="ECO:0000250" key="2">
    <source>
        <dbReference type="UniProtKB" id="Q9FFE0"/>
    </source>
</evidence>
<evidence type="ECO:0000305" key="3"/>
<sequence>MAFVTTAEVCDANQEMIRSGQLRALQPVFQIYGRRQIFSGPVVTVKVFEDNGLIRHFLEEKGNGRVLVVDGGGSLRCAILGGNPVVQAQNNGWAGIIVNGCIRDVDEINGCDIGVRALASHPIKASKKGLGEQRVSLNIAGTRICDGEWLYADTDGILVSQIELSV</sequence>
<proteinExistence type="evidence at transcript level"/>
<dbReference type="EC" id="4.1.3.17"/>
<dbReference type="EC" id="4.1.1.112"/>
<dbReference type="EMBL" id="AC018363">
    <property type="protein sequence ID" value="AAF26983.1"/>
    <property type="molecule type" value="Genomic_DNA"/>
</dbReference>
<dbReference type="EMBL" id="CP002686">
    <property type="protein sequence ID" value="AEE73858.1"/>
    <property type="molecule type" value="Genomic_DNA"/>
</dbReference>
<dbReference type="EMBL" id="AY086886">
    <property type="protein sequence ID" value="AAM63931.1"/>
    <property type="molecule type" value="mRNA"/>
</dbReference>
<dbReference type="RefSeq" id="NP_186926.1">
    <property type="nucleotide sequence ID" value="NM_111145.4"/>
</dbReference>
<dbReference type="SMR" id="Q9M8R9"/>
<dbReference type="FunCoup" id="Q9M8R9">
    <property type="interactions" value="164"/>
</dbReference>
<dbReference type="IntAct" id="Q9M8R9">
    <property type="interactions" value="1"/>
</dbReference>
<dbReference type="STRING" id="3702.Q9M8R9"/>
<dbReference type="iPTMnet" id="Q9M8R9"/>
<dbReference type="PaxDb" id="3702-AT3G02770.1"/>
<dbReference type="ProteomicsDB" id="228254"/>
<dbReference type="EnsemblPlants" id="AT3G02770.1">
    <property type="protein sequence ID" value="AT3G02770.1"/>
    <property type="gene ID" value="AT3G02770"/>
</dbReference>
<dbReference type="GeneID" id="820949"/>
<dbReference type="Gramene" id="AT3G02770.1">
    <property type="protein sequence ID" value="AT3G02770.1"/>
    <property type="gene ID" value="AT3G02770"/>
</dbReference>
<dbReference type="KEGG" id="ath:AT3G02770"/>
<dbReference type="Araport" id="AT3G02770"/>
<dbReference type="TAIR" id="AT3G02770"/>
<dbReference type="eggNOG" id="ENOG502S32I">
    <property type="taxonomic scope" value="Eukaryota"/>
</dbReference>
<dbReference type="HOGENOM" id="CLU_072626_4_1_1"/>
<dbReference type="InParanoid" id="Q9M8R9"/>
<dbReference type="OMA" id="NQMIQPG"/>
<dbReference type="OrthoDB" id="1476984at2759"/>
<dbReference type="PhylomeDB" id="Q9M8R9"/>
<dbReference type="PRO" id="PR:Q9M8R9"/>
<dbReference type="Proteomes" id="UP000006548">
    <property type="component" value="Chromosome 3"/>
</dbReference>
<dbReference type="ExpressionAtlas" id="Q9M8R9">
    <property type="expression patterns" value="baseline and differential"/>
</dbReference>
<dbReference type="GO" id="GO:0005829">
    <property type="term" value="C:cytosol"/>
    <property type="evidence" value="ECO:0007005"/>
    <property type="project" value="TAIR"/>
</dbReference>
<dbReference type="GO" id="GO:0047443">
    <property type="term" value="F:4-hydroxy-4-methyl-2-oxoglutarate aldolase activity"/>
    <property type="evidence" value="ECO:0007669"/>
    <property type="project" value="UniProtKB-EC"/>
</dbReference>
<dbReference type="GO" id="GO:0046872">
    <property type="term" value="F:metal ion binding"/>
    <property type="evidence" value="ECO:0007669"/>
    <property type="project" value="UniProtKB-KW"/>
</dbReference>
<dbReference type="GO" id="GO:0008948">
    <property type="term" value="F:oxaloacetate decarboxylase activity"/>
    <property type="evidence" value="ECO:0007669"/>
    <property type="project" value="UniProtKB-EC"/>
</dbReference>
<dbReference type="GO" id="GO:0008428">
    <property type="term" value="F:ribonuclease inhibitor activity"/>
    <property type="evidence" value="ECO:0007669"/>
    <property type="project" value="InterPro"/>
</dbReference>
<dbReference type="GO" id="GO:0051252">
    <property type="term" value="P:regulation of RNA metabolic process"/>
    <property type="evidence" value="ECO:0007669"/>
    <property type="project" value="InterPro"/>
</dbReference>
<dbReference type="CDD" id="cd16841">
    <property type="entry name" value="RraA_family"/>
    <property type="match status" value="1"/>
</dbReference>
<dbReference type="Gene3D" id="3.50.30.40">
    <property type="entry name" value="Ribonuclease E inhibitor RraA/RraA-like"/>
    <property type="match status" value="1"/>
</dbReference>
<dbReference type="InterPro" id="IPR010203">
    <property type="entry name" value="RraA"/>
</dbReference>
<dbReference type="InterPro" id="IPR005493">
    <property type="entry name" value="RraA/RraA-like"/>
</dbReference>
<dbReference type="InterPro" id="IPR036704">
    <property type="entry name" value="RraA/RraA-like_sf"/>
</dbReference>
<dbReference type="NCBIfam" id="TIGR01935">
    <property type="entry name" value="NOT-MenG"/>
    <property type="match status" value="1"/>
</dbReference>
<dbReference type="NCBIfam" id="NF006875">
    <property type="entry name" value="PRK09372.1"/>
    <property type="match status" value="1"/>
</dbReference>
<dbReference type="PANTHER" id="PTHR33254:SF17">
    <property type="entry name" value="4-HYDROXY-4-METHYL-2-OXOGLUTARATE ALDOLASE 1-RELATED"/>
    <property type="match status" value="1"/>
</dbReference>
<dbReference type="PANTHER" id="PTHR33254">
    <property type="entry name" value="4-HYDROXY-4-METHYL-2-OXOGLUTARATE ALDOLASE 3-RELATED"/>
    <property type="match status" value="1"/>
</dbReference>
<dbReference type="Pfam" id="PF03737">
    <property type="entry name" value="RraA-like"/>
    <property type="match status" value="1"/>
</dbReference>
<dbReference type="SUPFAM" id="SSF89562">
    <property type="entry name" value="RraA-like"/>
    <property type="match status" value="1"/>
</dbReference>
<organism>
    <name type="scientific">Arabidopsis thaliana</name>
    <name type="common">Mouse-ear cress</name>
    <dbReference type="NCBI Taxonomy" id="3702"/>
    <lineage>
        <taxon>Eukaryota</taxon>
        <taxon>Viridiplantae</taxon>
        <taxon>Streptophyta</taxon>
        <taxon>Embryophyta</taxon>
        <taxon>Tracheophyta</taxon>
        <taxon>Spermatophyta</taxon>
        <taxon>Magnoliopsida</taxon>
        <taxon>eudicotyledons</taxon>
        <taxon>Gunneridae</taxon>
        <taxon>Pentapetalae</taxon>
        <taxon>rosids</taxon>
        <taxon>malvids</taxon>
        <taxon>Brassicales</taxon>
        <taxon>Brassicaceae</taxon>
        <taxon>Camelineae</taxon>
        <taxon>Arabidopsis</taxon>
    </lineage>
</organism>
<reference key="1">
    <citation type="journal article" date="2000" name="Nature">
        <title>Sequence and analysis of chromosome 3 of the plant Arabidopsis thaliana.</title>
        <authorList>
            <person name="Salanoubat M."/>
            <person name="Lemcke K."/>
            <person name="Rieger M."/>
            <person name="Ansorge W."/>
            <person name="Unseld M."/>
            <person name="Fartmann B."/>
            <person name="Valle G."/>
            <person name="Bloecker H."/>
            <person name="Perez-Alonso M."/>
            <person name="Obermaier B."/>
            <person name="Delseny M."/>
            <person name="Boutry M."/>
            <person name="Grivell L.A."/>
            <person name="Mache R."/>
            <person name="Puigdomenech P."/>
            <person name="De Simone V."/>
            <person name="Choisne N."/>
            <person name="Artiguenave F."/>
            <person name="Robert C."/>
            <person name="Brottier P."/>
            <person name="Wincker P."/>
            <person name="Cattolico L."/>
            <person name="Weissenbach J."/>
            <person name="Saurin W."/>
            <person name="Quetier F."/>
            <person name="Schaefer M."/>
            <person name="Mueller-Auer S."/>
            <person name="Gabel C."/>
            <person name="Fuchs M."/>
            <person name="Benes V."/>
            <person name="Wurmbach E."/>
            <person name="Drzonek H."/>
            <person name="Erfle H."/>
            <person name="Jordan N."/>
            <person name="Bangert S."/>
            <person name="Wiedelmann R."/>
            <person name="Kranz H."/>
            <person name="Voss H."/>
            <person name="Holland R."/>
            <person name="Brandt P."/>
            <person name="Nyakatura G."/>
            <person name="Vezzi A."/>
            <person name="D'Angelo M."/>
            <person name="Pallavicini A."/>
            <person name="Toppo S."/>
            <person name="Simionati B."/>
            <person name="Conrad A."/>
            <person name="Hornischer K."/>
            <person name="Kauer G."/>
            <person name="Loehnert T.-H."/>
            <person name="Nordsiek G."/>
            <person name="Reichelt J."/>
            <person name="Scharfe M."/>
            <person name="Schoen O."/>
            <person name="Bargues M."/>
            <person name="Terol J."/>
            <person name="Climent J."/>
            <person name="Navarro P."/>
            <person name="Collado C."/>
            <person name="Perez-Perez A."/>
            <person name="Ottenwaelder B."/>
            <person name="Duchemin D."/>
            <person name="Cooke R."/>
            <person name="Laudie M."/>
            <person name="Berger-Llauro C."/>
            <person name="Purnelle B."/>
            <person name="Masuy D."/>
            <person name="de Haan M."/>
            <person name="Maarse A.C."/>
            <person name="Alcaraz J.-P."/>
            <person name="Cottet A."/>
            <person name="Casacuberta E."/>
            <person name="Monfort A."/>
            <person name="Argiriou A."/>
            <person name="Flores M."/>
            <person name="Liguori R."/>
            <person name="Vitale D."/>
            <person name="Mannhaupt G."/>
            <person name="Haase D."/>
            <person name="Schoof H."/>
            <person name="Rudd S."/>
            <person name="Zaccaria P."/>
            <person name="Mewes H.-W."/>
            <person name="Mayer K.F.X."/>
            <person name="Kaul S."/>
            <person name="Town C.D."/>
            <person name="Koo H.L."/>
            <person name="Tallon L.J."/>
            <person name="Jenkins J."/>
            <person name="Rooney T."/>
            <person name="Rizzo M."/>
            <person name="Walts A."/>
            <person name="Utterback T."/>
            <person name="Fujii C.Y."/>
            <person name="Shea T.P."/>
            <person name="Creasy T.H."/>
            <person name="Haas B."/>
            <person name="Maiti R."/>
            <person name="Wu D."/>
            <person name="Peterson J."/>
            <person name="Van Aken S."/>
            <person name="Pai G."/>
            <person name="Militscher J."/>
            <person name="Sellers P."/>
            <person name="Gill J.E."/>
            <person name="Feldblyum T.V."/>
            <person name="Preuss D."/>
            <person name="Lin X."/>
            <person name="Nierman W.C."/>
            <person name="Salzberg S.L."/>
            <person name="White O."/>
            <person name="Venter J.C."/>
            <person name="Fraser C.M."/>
            <person name="Kaneko T."/>
            <person name="Nakamura Y."/>
            <person name="Sato S."/>
            <person name="Kato T."/>
            <person name="Asamizu E."/>
            <person name="Sasamoto S."/>
            <person name="Kimura T."/>
            <person name="Idesawa K."/>
            <person name="Kawashima K."/>
            <person name="Kishida Y."/>
            <person name="Kiyokawa C."/>
            <person name="Kohara M."/>
            <person name="Matsumoto M."/>
            <person name="Matsuno A."/>
            <person name="Muraki A."/>
            <person name="Nakayama S."/>
            <person name="Nakazaki N."/>
            <person name="Shinpo S."/>
            <person name="Takeuchi C."/>
            <person name="Wada T."/>
            <person name="Watanabe A."/>
            <person name="Yamada M."/>
            <person name="Yasuda M."/>
            <person name="Tabata S."/>
        </authorList>
    </citation>
    <scope>NUCLEOTIDE SEQUENCE [LARGE SCALE GENOMIC DNA]</scope>
    <source>
        <strain>cv. Columbia</strain>
    </source>
</reference>
<reference key="2">
    <citation type="journal article" date="2017" name="Plant J.">
        <title>Araport11: a complete reannotation of the Arabidopsis thaliana reference genome.</title>
        <authorList>
            <person name="Cheng C.Y."/>
            <person name="Krishnakumar V."/>
            <person name="Chan A.P."/>
            <person name="Thibaud-Nissen F."/>
            <person name="Schobel S."/>
            <person name="Town C.D."/>
        </authorList>
    </citation>
    <scope>GENOME REANNOTATION</scope>
    <source>
        <strain>cv. Columbia</strain>
    </source>
</reference>
<reference key="3">
    <citation type="submission" date="2002-03" db="EMBL/GenBank/DDBJ databases">
        <title>Full-length cDNA from Arabidopsis thaliana.</title>
        <authorList>
            <person name="Brover V.V."/>
            <person name="Troukhan M.E."/>
            <person name="Alexandrov N.A."/>
            <person name="Lu Y.-P."/>
            <person name="Flavell R.B."/>
            <person name="Feldmann K.A."/>
        </authorList>
    </citation>
    <scope>NUCLEOTIDE SEQUENCE [LARGE SCALE MRNA]</scope>
</reference>
<gene>
    <name type="ordered locus">At3g02770</name>
    <name type="ORF">F13E7.29</name>
</gene>